<organism>
    <name type="scientific">Shigella dysenteriae serotype 1 (strain Sd197)</name>
    <dbReference type="NCBI Taxonomy" id="300267"/>
    <lineage>
        <taxon>Bacteria</taxon>
        <taxon>Pseudomonadati</taxon>
        <taxon>Pseudomonadota</taxon>
        <taxon>Gammaproteobacteria</taxon>
        <taxon>Enterobacterales</taxon>
        <taxon>Enterobacteriaceae</taxon>
        <taxon>Shigella</taxon>
    </lineage>
</organism>
<protein>
    <recommendedName>
        <fullName evidence="1">Glucans biosynthesis protein G</fullName>
    </recommendedName>
</protein>
<sequence length="511" mass="57911">MMKMRWLSAAVMLTLYTSSSWAFSIDDVAKQAQSLAGKGYEAPKSNLPSVFRDMKYADYQQIQFNHDKAYWNNLKTPFKLEFYHQGMYFDTPVKINEVTATAVKRIKYSPDYFTFGDVRHDKDTVKDLGFAGFKVLYPINSKDKNDEIVSMLGASYFRVIGAGQVYGLSARGLAIDTALPSGEEFPRFKEFWIERPKPTDKRLTIYALLDSPRATGAYKFVVMPGRDTVVDVQSKIYLRDKVGKLGVAPLTSMFLFGPNQPSPANNYRPELHDSNGLSIHAGNGEWIWRPLNNPKHLAVSSFSMENPQGFGLLQRGRDFSRFEDLDDRYDLRPSAWVTPKGEWGKGSVELVEIPTNDETNDNIVAYWTPDQLPEPGKEMNFKYTITFSRDEDKLHAPDNAWVQQTRRSTGDVKQSNLIRQPDGTIAFVVDFTGAEMKKLPEDTPVTAQTSIGDNGEIVESTVRYNPVTKGWRLVMRVKVKDAKKTTEMRAALVNADQTLSETWSYQLPANE</sequence>
<accession>Q32E76</accession>
<proteinExistence type="inferred from homology"/>
<dbReference type="EMBL" id="CP000034">
    <property type="protein sequence ID" value="ABB62379.1"/>
    <property type="molecule type" value="Genomic_DNA"/>
</dbReference>
<dbReference type="RefSeq" id="WP_011378797.1">
    <property type="nucleotide sequence ID" value="NC_007606.1"/>
</dbReference>
<dbReference type="RefSeq" id="YP_403870.1">
    <property type="nucleotide sequence ID" value="NC_007606.1"/>
</dbReference>
<dbReference type="SMR" id="Q32E76"/>
<dbReference type="STRING" id="300267.SDY_2302"/>
<dbReference type="EnsemblBacteria" id="ABB62379">
    <property type="protein sequence ID" value="ABB62379"/>
    <property type="gene ID" value="SDY_2302"/>
</dbReference>
<dbReference type="KEGG" id="sdy:SDY_2302"/>
<dbReference type="PATRIC" id="fig|300267.13.peg.2778"/>
<dbReference type="HOGENOM" id="CLU_023403_2_0_6"/>
<dbReference type="UniPathway" id="UPA00637"/>
<dbReference type="Proteomes" id="UP000002716">
    <property type="component" value="Chromosome"/>
</dbReference>
<dbReference type="GO" id="GO:0030288">
    <property type="term" value="C:outer membrane-bounded periplasmic space"/>
    <property type="evidence" value="ECO:0007669"/>
    <property type="project" value="TreeGrafter"/>
</dbReference>
<dbReference type="GO" id="GO:0030246">
    <property type="term" value="F:carbohydrate binding"/>
    <property type="evidence" value="ECO:0007669"/>
    <property type="project" value="InterPro"/>
</dbReference>
<dbReference type="GO" id="GO:0003824">
    <property type="term" value="F:catalytic activity"/>
    <property type="evidence" value="ECO:0007669"/>
    <property type="project" value="InterPro"/>
</dbReference>
<dbReference type="GO" id="GO:0051274">
    <property type="term" value="P:beta-glucan biosynthetic process"/>
    <property type="evidence" value="ECO:0007669"/>
    <property type="project" value="TreeGrafter"/>
</dbReference>
<dbReference type="FunFam" id="2.60.40.10:FF:000294">
    <property type="entry name" value="Glucans biosynthesis protein G"/>
    <property type="match status" value="1"/>
</dbReference>
<dbReference type="FunFam" id="2.70.98.10:FF:000001">
    <property type="entry name" value="Glucans biosynthesis protein G"/>
    <property type="match status" value="1"/>
</dbReference>
<dbReference type="Gene3D" id="2.70.98.10">
    <property type="match status" value="1"/>
</dbReference>
<dbReference type="Gene3D" id="2.60.40.10">
    <property type="entry name" value="Immunoglobulins"/>
    <property type="match status" value="1"/>
</dbReference>
<dbReference type="HAMAP" id="MF_01069">
    <property type="entry name" value="MdoG_OpgG"/>
    <property type="match status" value="1"/>
</dbReference>
<dbReference type="InterPro" id="IPR011013">
    <property type="entry name" value="Gal_mutarotase_sf_dom"/>
</dbReference>
<dbReference type="InterPro" id="IPR014718">
    <property type="entry name" value="GH-type_carb-bd"/>
</dbReference>
<dbReference type="InterPro" id="IPR014438">
    <property type="entry name" value="Glucan_biosyn_MdoG/MdoD"/>
</dbReference>
<dbReference type="InterPro" id="IPR007444">
    <property type="entry name" value="Glucan_biosyn_MdoG_C"/>
</dbReference>
<dbReference type="InterPro" id="IPR013783">
    <property type="entry name" value="Ig-like_fold"/>
</dbReference>
<dbReference type="InterPro" id="IPR014756">
    <property type="entry name" value="Ig_E-set"/>
</dbReference>
<dbReference type="InterPro" id="IPR023704">
    <property type="entry name" value="MdoG_OpgG"/>
</dbReference>
<dbReference type="PANTHER" id="PTHR30504">
    <property type="entry name" value="GLUCANS BIOSYNTHESIS PROTEIN"/>
    <property type="match status" value="1"/>
</dbReference>
<dbReference type="PANTHER" id="PTHR30504:SF4">
    <property type="entry name" value="GLUCANS BIOSYNTHESIS PROTEIN G"/>
    <property type="match status" value="1"/>
</dbReference>
<dbReference type="Pfam" id="PF04349">
    <property type="entry name" value="MdoG"/>
    <property type="match status" value="1"/>
</dbReference>
<dbReference type="PIRSF" id="PIRSF006281">
    <property type="entry name" value="MdoG"/>
    <property type="match status" value="1"/>
</dbReference>
<dbReference type="SUPFAM" id="SSF81296">
    <property type="entry name" value="E set domains"/>
    <property type="match status" value="1"/>
</dbReference>
<dbReference type="SUPFAM" id="SSF74650">
    <property type="entry name" value="Galactose mutarotase-like"/>
    <property type="match status" value="1"/>
</dbReference>
<feature type="signal peptide" evidence="1">
    <location>
        <begin position="1"/>
        <end position="22"/>
    </location>
</feature>
<feature type="chain" id="PRO_1000064568" description="Glucans biosynthesis protein G">
    <location>
        <begin position="23"/>
        <end position="511"/>
    </location>
</feature>
<evidence type="ECO:0000255" key="1">
    <source>
        <dbReference type="HAMAP-Rule" id="MF_01069"/>
    </source>
</evidence>
<reference key="1">
    <citation type="journal article" date="2005" name="Nucleic Acids Res.">
        <title>Genome dynamics and diversity of Shigella species, the etiologic agents of bacillary dysentery.</title>
        <authorList>
            <person name="Yang F."/>
            <person name="Yang J."/>
            <person name="Zhang X."/>
            <person name="Chen L."/>
            <person name="Jiang Y."/>
            <person name="Yan Y."/>
            <person name="Tang X."/>
            <person name="Wang J."/>
            <person name="Xiong Z."/>
            <person name="Dong J."/>
            <person name="Xue Y."/>
            <person name="Zhu Y."/>
            <person name="Xu X."/>
            <person name="Sun L."/>
            <person name="Chen S."/>
            <person name="Nie H."/>
            <person name="Peng J."/>
            <person name="Xu J."/>
            <person name="Wang Y."/>
            <person name="Yuan Z."/>
            <person name="Wen Y."/>
            <person name="Yao Z."/>
            <person name="Shen Y."/>
            <person name="Qiang B."/>
            <person name="Hou Y."/>
            <person name="Yu J."/>
            <person name="Jin Q."/>
        </authorList>
    </citation>
    <scope>NUCLEOTIDE SEQUENCE [LARGE SCALE GENOMIC DNA]</scope>
    <source>
        <strain>Sd197</strain>
    </source>
</reference>
<keyword id="KW-0574">Periplasm</keyword>
<keyword id="KW-1185">Reference proteome</keyword>
<keyword id="KW-0732">Signal</keyword>
<comment type="function">
    <text evidence="1">Involved in the biosynthesis of osmoregulated periplasmic glucans (OPGs).</text>
</comment>
<comment type="pathway">
    <text evidence="1">Glycan metabolism; osmoregulated periplasmic glucan (OPG) biosynthesis.</text>
</comment>
<comment type="subcellular location">
    <subcellularLocation>
        <location evidence="1">Periplasm</location>
    </subcellularLocation>
</comment>
<comment type="similarity">
    <text evidence="1">Belongs to the OpgD/OpgG family.</text>
</comment>
<gene>
    <name evidence="1" type="primary">mdoG</name>
    <name evidence="1" type="synonym">opgG</name>
    <name type="ordered locus">SDY_2302</name>
</gene>
<name>OPGG_SHIDS</name>